<accession>Q9Z9G8</accession>
<accession>Q9JQC3</accession>
<name>GATC_CHLPN</name>
<feature type="chain" id="PRO_0000105289" description="Glutamyl-tRNA(Gln) amidotransferase subunit C">
    <location>
        <begin position="1"/>
        <end position="101"/>
    </location>
</feature>
<organism>
    <name type="scientific">Chlamydia pneumoniae</name>
    <name type="common">Chlamydophila pneumoniae</name>
    <dbReference type="NCBI Taxonomy" id="83558"/>
    <lineage>
        <taxon>Bacteria</taxon>
        <taxon>Pseudomonadati</taxon>
        <taxon>Chlamydiota</taxon>
        <taxon>Chlamydiia</taxon>
        <taxon>Chlamydiales</taxon>
        <taxon>Chlamydiaceae</taxon>
        <taxon>Chlamydia/Chlamydophila group</taxon>
        <taxon>Chlamydia</taxon>
    </lineage>
</organism>
<comment type="function">
    <text evidence="1">Allows the formation of correctly charged Asn-tRNA(Asn) or Gln-tRNA(Gln) through the transamidation of misacylated Asp-tRNA(Asn) or Glu-tRNA(Gln) in organisms which lack either or both of asparaginyl-tRNA or glutaminyl-tRNA synthetases. The reaction takes place in the presence of glutamine and ATP through an activated phospho-Asp-tRNA(Asn) or phospho-Glu-tRNA(Gln) (By similarity).</text>
</comment>
<comment type="catalytic activity">
    <reaction>
        <text>L-glutamyl-tRNA(Gln) + L-glutamine + ATP + H2O = L-glutaminyl-tRNA(Gln) + L-glutamate + ADP + phosphate + H(+)</text>
        <dbReference type="Rhea" id="RHEA:17521"/>
        <dbReference type="Rhea" id="RHEA-COMP:9681"/>
        <dbReference type="Rhea" id="RHEA-COMP:9684"/>
        <dbReference type="ChEBI" id="CHEBI:15377"/>
        <dbReference type="ChEBI" id="CHEBI:15378"/>
        <dbReference type="ChEBI" id="CHEBI:29985"/>
        <dbReference type="ChEBI" id="CHEBI:30616"/>
        <dbReference type="ChEBI" id="CHEBI:43474"/>
        <dbReference type="ChEBI" id="CHEBI:58359"/>
        <dbReference type="ChEBI" id="CHEBI:78520"/>
        <dbReference type="ChEBI" id="CHEBI:78521"/>
        <dbReference type="ChEBI" id="CHEBI:456216"/>
    </reaction>
</comment>
<comment type="catalytic activity">
    <reaction>
        <text>L-aspartyl-tRNA(Asn) + L-glutamine + ATP + H2O = L-asparaginyl-tRNA(Asn) + L-glutamate + ADP + phosphate + 2 H(+)</text>
        <dbReference type="Rhea" id="RHEA:14513"/>
        <dbReference type="Rhea" id="RHEA-COMP:9674"/>
        <dbReference type="Rhea" id="RHEA-COMP:9677"/>
        <dbReference type="ChEBI" id="CHEBI:15377"/>
        <dbReference type="ChEBI" id="CHEBI:15378"/>
        <dbReference type="ChEBI" id="CHEBI:29985"/>
        <dbReference type="ChEBI" id="CHEBI:30616"/>
        <dbReference type="ChEBI" id="CHEBI:43474"/>
        <dbReference type="ChEBI" id="CHEBI:58359"/>
        <dbReference type="ChEBI" id="CHEBI:78515"/>
        <dbReference type="ChEBI" id="CHEBI:78516"/>
        <dbReference type="ChEBI" id="CHEBI:456216"/>
    </reaction>
</comment>
<comment type="subunit">
    <text evidence="1">Heterotrimer of A, B and C subunits.</text>
</comment>
<comment type="similarity">
    <text evidence="2">Belongs to the GatC family.</text>
</comment>
<gene>
    <name type="primary">gatC</name>
    <name type="ordered locus">CPn_0002</name>
    <name type="ordered locus">CP_0773</name>
    <name type="ordered locus">CpB0003</name>
</gene>
<keyword id="KW-0067">ATP-binding</keyword>
<keyword id="KW-0436">Ligase</keyword>
<keyword id="KW-0547">Nucleotide-binding</keyword>
<keyword id="KW-0648">Protein biosynthesis</keyword>
<evidence type="ECO:0000250" key="1"/>
<evidence type="ECO:0000305" key="2"/>
<dbReference type="EC" id="6.3.5.-"/>
<dbReference type="EMBL" id="AE001363">
    <property type="protein sequence ID" value="AAD18160.1"/>
    <property type="molecule type" value="Genomic_DNA"/>
</dbReference>
<dbReference type="EMBL" id="AE002161">
    <property type="protein sequence ID" value="AAF73703.1"/>
    <property type="molecule type" value="Genomic_DNA"/>
</dbReference>
<dbReference type="EMBL" id="BA000008">
    <property type="protein sequence ID" value="BAA98212.1"/>
    <property type="molecule type" value="Genomic_DNA"/>
</dbReference>
<dbReference type="EMBL" id="AE009440">
    <property type="protein sequence ID" value="AAP97936.1"/>
    <property type="molecule type" value="Genomic_DNA"/>
</dbReference>
<dbReference type="PIR" id="B86491">
    <property type="entry name" value="B86491"/>
</dbReference>
<dbReference type="PIR" id="G72130">
    <property type="entry name" value="G72130"/>
</dbReference>
<dbReference type="RefSeq" id="NP_224215.1">
    <property type="nucleotide sequence ID" value="NC_000922.1"/>
</dbReference>
<dbReference type="RefSeq" id="WP_010882657.1">
    <property type="nucleotide sequence ID" value="NZ_LN847257.1"/>
</dbReference>
<dbReference type="SMR" id="Q9Z9G8"/>
<dbReference type="STRING" id="406984.CPK_ORF00503"/>
<dbReference type="GeneID" id="45050051"/>
<dbReference type="KEGG" id="cpa:CP_0773"/>
<dbReference type="KEGG" id="cpj:gatC"/>
<dbReference type="KEGG" id="cpn:CPn_0002"/>
<dbReference type="KEGG" id="cpt:CpB0003"/>
<dbReference type="PATRIC" id="fig|115713.3.peg.3"/>
<dbReference type="eggNOG" id="COG0721">
    <property type="taxonomic scope" value="Bacteria"/>
</dbReference>
<dbReference type="HOGENOM" id="CLU_105899_1_2_0"/>
<dbReference type="OMA" id="QPYITRE"/>
<dbReference type="OrthoDB" id="18187at2"/>
<dbReference type="Proteomes" id="UP000000583">
    <property type="component" value="Chromosome"/>
</dbReference>
<dbReference type="Proteomes" id="UP000000801">
    <property type="component" value="Chromosome"/>
</dbReference>
<dbReference type="GO" id="GO:0050566">
    <property type="term" value="F:asparaginyl-tRNA synthase (glutamine-hydrolyzing) activity"/>
    <property type="evidence" value="ECO:0007669"/>
    <property type="project" value="RHEA"/>
</dbReference>
<dbReference type="GO" id="GO:0005524">
    <property type="term" value="F:ATP binding"/>
    <property type="evidence" value="ECO:0007669"/>
    <property type="project" value="UniProtKB-KW"/>
</dbReference>
<dbReference type="GO" id="GO:0050567">
    <property type="term" value="F:glutaminyl-tRNA synthase (glutamine-hydrolyzing) activity"/>
    <property type="evidence" value="ECO:0007669"/>
    <property type="project" value="UniProtKB-UniRule"/>
</dbReference>
<dbReference type="GO" id="GO:0006450">
    <property type="term" value="P:regulation of translational fidelity"/>
    <property type="evidence" value="ECO:0007669"/>
    <property type="project" value="InterPro"/>
</dbReference>
<dbReference type="GO" id="GO:0006412">
    <property type="term" value="P:translation"/>
    <property type="evidence" value="ECO:0007669"/>
    <property type="project" value="UniProtKB-UniRule"/>
</dbReference>
<dbReference type="HAMAP" id="MF_00122">
    <property type="entry name" value="GatC"/>
    <property type="match status" value="1"/>
</dbReference>
<dbReference type="InterPro" id="IPR036113">
    <property type="entry name" value="Asp/Glu-ADT_sf_sub_c"/>
</dbReference>
<dbReference type="InterPro" id="IPR003837">
    <property type="entry name" value="GatC"/>
</dbReference>
<dbReference type="NCBIfam" id="TIGR00135">
    <property type="entry name" value="gatC"/>
    <property type="match status" value="1"/>
</dbReference>
<dbReference type="Pfam" id="PF02686">
    <property type="entry name" value="GatC"/>
    <property type="match status" value="1"/>
</dbReference>
<dbReference type="SUPFAM" id="SSF141000">
    <property type="entry name" value="Glu-tRNAGln amidotransferase C subunit"/>
    <property type="match status" value="1"/>
</dbReference>
<proteinExistence type="inferred from homology"/>
<reference key="1">
    <citation type="journal article" date="1999" name="Nat. Genet.">
        <title>Comparative genomes of Chlamydia pneumoniae and C. trachomatis.</title>
        <authorList>
            <person name="Kalman S."/>
            <person name="Mitchell W.P."/>
            <person name="Marathe R."/>
            <person name="Lammel C.J."/>
            <person name="Fan J."/>
            <person name="Hyman R.W."/>
            <person name="Olinger L."/>
            <person name="Grimwood J."/>
            <person name="Davis R.W."/>
            <person name="Stephens R.S."/>
        </authorList>
    </citation>
    <scope>NUCLEOTIDE SEQUENCE [LARGE SCALE GENOMIC DNA]</scope>
    <source>
        <strain>CWL029</strain>
    </source>
</reference>
<reference key="2">
    <citation type="journal article" date="2000" name="Nucleic Acids Res.">
        <title>Genome sequences of Chlamydia trachomatis MoPn and Chlamydia pneumoniae AR39.</title>
        <authorList>
            <person name="Read T.D."/>
            <person name="Brunham R.C."/>
            <person name="Shen C."/>
            <person name="Gill S.R."/>
            <person name="Heidelberg J.F."/>
            <person name="White O."/>
            <person name="Hickey E.K."/>
            <person name="Peterson J.D."/>
            <person name="Utterback T.R."/>
            <person name="Berry K.J."/>
            <person name="Bass S."/>
            <person name="Linher K.D."/>
            <person name="Weidman J.F."/>
            <person name="Khouri H.M."/>
            <person name="Craven B."/>
            <person name="Bowman C."/>
            <person name="Dodson R.J."/>
            <person name="Gwinn M.L."/>
            <person name="Nelson W.C."/>
            <person name="DeBoy R.T."/>
            <person name="Kolonay J.F."/>
            <person name="McClarty G."/>
            <person name="Salzberg S.L."/>
            <person name="Eisen J.A."/>
            <person name="Fraser C.M."/>
        </authorList>
    </citation>
    <scope>NUCLEOTIDE SEQUENCE [LARGE SCALE GENOMIC DNA]</scope>
    <source>
        <strain>AR39</strain>
    </source>
</reference>
<reference key="3">
    <citation type="journal article" date="2000" name="Nucleic Acids Res.">
        <title>Comparison of whole genome sequences of Chlamydia pneumoniae J138 from Japan and CWL029 from USA.</title>
        <authorList>
            <person name="Shirai M."/>
            <person name="Hirakawa H."/>
            <person name="Kimoto M."/>
            <person name="Tabuchi M."/>
            <person name="Kishi F."/>
            <person name="Ouchi K."/>
            <person name="Shiba T."/>
            <person name="Ishii K."/>
            <person name="Hattori M."/>
            <person name="Kuhara S."/>
            <person name="Nakazawa T."/>
        </authorList>
    </citation>
    <scope>NUCLEOTIDE SEQUENCE [LARGE SCALE GENOMIC DNA]</scope>
    <source>
        <strain>J138</strain>
    </source>
</reference>
<reference key="4">
    <citation type="submission" date="2002-05" db="EMBL/GenBank/DDBJ databases">
        <title>The genome sequence of Chlamydia pneumoniae TW183 and comparison with other Chlamydia strains based on whole genome sequence analysis.</title>
        <authorList>
            <person name="Geng M.M."/>
            <person name="Schuhmacher A."/>
            <person name="Muehldorfer I."/>
            <person name="Bensch K.W."/>
            <person name="Schaefer K.P."/>
            <person name="Schneider S."/>
            <person name="Pohl T."/>
            <person name="Essig A."/>
            <person name="Marre R."/>
            <person name="Melchers K."/>
        </authorList>
    </citation>
    <scope>NUCLEOTIDE SEQUENCE [LARGE SCALE GENOMIC DNA]</scope>
    <source>
        <strain>TW-183</strain>
    </source>
</reference>
<protein>
    <recommendedName>
        <fullName>Glutamyl-tRNA(Gln) amidotransferase subunit C</fullName>
        <shortName>Glu-ADT subunit C</shortName>
        <ecNumber>6.3.5.-</ecNumber>
    </recommendedName>
</protein>
<sequence length="101" mass="11353">MEQFHLDREEILLLAKASALQLSEELIQEYQTSLSAVITSMKEALAIEIDDADSCESLFMHVVNVEDLREDSVTSDFNREEFLRNVPESLGGLVKVPAVIK</sequence>